<proteinExistence type="inferred from homology"/>
<dbReference type="EC" id="1.4.99.-" evidence="1"/>
<dbReference type="EMBL" id="CP000521">
    <property type="protein sequence ID" value="ABO10584.2"/>
    <property type="molecule type" value="Genomic_DNA"/>
</dbReference>
<dbReference type="RefSeq" id="WP_001263974.1">
    <property type="nucleotide sequence ID" value="NZ_CP053098.1"/>
</dbReference>
<dbReference type="SMR" id="A3M0Z0"/>
<dbReference type="KEGG" id="acb:A1S_0095"/>
<dbReference type="HOGENOM" id="CLU_007884_9_2_6"/>
<dbReference type="UniPathway" id="UPA00043">
    <property type="reaction ID" value="UER00498"/>
</dbReference>
<dbReference type="GO" id="GO:0005737">
    <property type="term" value="C:cytoplasm"/>
    <property type="evidence" value="ECO:0007669"/>
    <property type="project" value="TreeGrafter"/>
</dbReference>
<dbReference type="GO" id="GO:0005886">
    <property type="term" value="C:plasma membrane"/>
    <property type="evidence" value="ECO:0007669"/>
    <property type="project" value="TreeGrafter"/>
</dbReference>
<dbReference type="GO" id="GO:0008718">
    <property type="term" value="F:D-amino-acid dehydrogenase activity"/>
    <property type="evidence" value="ECO:0007669"/>
    <property type="project" value="UniProtKB-UniRule"/>
</dbReference>
<dbReference type="GO" id="GO:0055130">
    <property type="term" value="P:D-alanine catabolic process"/>
    <property type="evidence" value="ECO:0007669"/>
    <property type="project" value="UniProtKB-UniPathway"/>
</dbReference>
<dbReference type="FunFam" id="3.50.50.60:FF:000020">
    <property type="entry name" value="D-amino acid dehydrogenase"/>
    <property type="match status" value="1"/>
</dbReference>
<dbReference type="Gene3D" id="3.30.9.10">
    <property type="entry name" value="D-Amino Acid Oxidase, subunit A, domain 2"/>
    <property type="match status" value="1"/>
</dbReference>
<dbReference type="Gene3D" id="3.50.50.60">
    <property type="entry name" value="FAD/NAD(P)-binding domain"/>
    <property type="match status" value="2"/>
</dbReference>
<dbReference type="HAMAP" id="MF_01202">
    <property type="entry name" value="DadA"/>
    <property type="match status" value="1"/>
</dbReference>
<dbReference type="InterPro" id="IPR023080">
    <property type="entry name" value="DadA"/>
</dbReference>
<dbReference type="InterPro" id="IPR006076">
    <property type="entry name" value="FAD-dep_OxRdtase"/>
</dbReference>
<dbReference type="InterPro" id="IPR036188">
    <property type="entry name" value="FAD/NAD-bd_sf"/>
</dbReference>
<dbReference type="NCBIfam" id="NF001933">
    <property type="entry name" value="PRK00711.1"/>
    <property type="match status" value="1"/>
</dbReference>
<dbReference type="PANTHER" id="PTHR13847:SF280">
    <property type="entry name" value="D-AMINO ACID DEHYDROGENASE"/>
    <property type="match status" value="1"/>
</dbReference>
<dbReference type="PANTHER" id="PTHR13847">
    <property type="entry name" value="SARCOSINE DEHYDROGENASE-RELATED"/>
    <property type="match status" value="1"/>
</dbReference>
<dbReference type="Pfam" id="PF01266">
    <property type="entry name" value="DAO"/>
    <property type="match status" value="1"/>
</dbReference>
<dbReference type="SUPFAM" id="SSF54373">
    <property type="entry name" value="FAD-linked reductases, C-terminal domain"/>
    <property type="match status" value="1"/>
</dbReference>
<dbReference type="SUPFAM" id="SSF51905">
    <property type="entry name" value="FAD/NAD(P)-binding domain"/>
    <property type="match status" value="1"/>
</dbReference>
<comment type="function">
    <text evidence="1">Oxidative deamination of D-amino acids.</text>
</comment>
<comment type="catalytic activity">
    <reaction evidence="1">
        <text>a D-alpha-amino acid + A + H2O = a 2-oxocarboxylate + AH2 + NH4(+)</text>
        <dbReference type="Rhea" id="RHEA:18125"/>
        <dbReference type="ChEBI" id="CHEBI:13193"/>
        <dbReference type="ChEBI" id="CHEBI:15377"/>
        <dbReference type="ChEBI" id="CHEBI:17499"/>
        <dbReference type="ChEBI" id="CHEBI:28938"/>
        <dbReference type="ChEBI" id="CHEBI:35179"/>
        <dbReference type="ChEBI" id="CHEBI:59871"/>
    </reaction>
</comment>
<comment type="cofactor">
    <cofactor evidence="1">
        <name>FAD</name>
        <dbReference type="ChEBI" id="CHEBI:57692"/>
    </cofactor>
</comment>
<comment type="pathway">
    <text>Amino-acid degradation; D-alanine degradation; NH(3) and pyruvate from D-alanine: step 1/1.</text>
</comment>
<comment type="similarity">
    <text evidence="1">Belongs to the DadA oxidoreductase family.</text>
</comment>
<keyword id="KW-0274">FAD</keyword>
<keyword id="KW-0285">Flavoprotein</keyword>
<keyword id="KW-0560">Oxidoreductase</keyword>
<gene>
    <name evidence="1" type="primary">dadA</name>
    <name type="ordered locus">A1S_0095</name>
</gene>
<name>DADA_ACIBT</name>
<evidence type="ECO:0000255" key="1">
    <source>
        <dbReference type="HAMAP-Rule" id="MF_01202"/>
    </source>
</evidence>
<organism>
    <name type="scientific">Acinetobacter baumannii (strain ATCC 17978 / DSM 105126 / CIP 53.77 / LMG 1025 / NCDC KC755 / 5377)</name>
    <dbReference type="NCBI Taxonomy" id="400667"/>
    <lineage>
        <taxon>Bacteria</taxon>
        <taxon>Pseudomonadati</taxon>
        <taxon>Pseudomonadota</taxon>
        <taxon>Gammaproteobacteria</taxon>
        <taxon>Moraxellales</taxon>
        <taxon>Moraxellaceae</taxon>
        <taxon>Acinetobacter</taxon>
        <taxon>Acinetobacter calcoaceticus/baumannii complex</taxon>
    </lineage>
</organism>
<protein>
    <recommendedName>
        <fullName evidence="1">D-amino acid dehydrogenase</fullName>
        <ecNumber evidence="1">1.4.99.-</ecNumber>
    </recommendedName>
</protein>
<feature type="chain" id="PRO_1000138637" description="D-amino acid dehydrogenase">
    <location>
        <begin position="1"/>
        <end position="421"/>
    </location>
</feature>
<feature type="binding site" evidence="1">
    <location>
        <begin position="3"/>
        <end position="17"/>
    </location>
    <ligand>
        <name>FAD</name>
        <dbReference type="ChEBI" id="CHEBI:57692"/>
    </ligand>
</feature>
<sequence length="421" mass="46512">MRVIVLGSGVIGVASAYYLARQGAEVTVLDRQSGPAEETSFGNAGQISPGYSTPWAAPGIPFKAVKWMFQHHAPLAINLDGSMWQLQWMAQMLKNCNPQSYAVNKERMMRVAEYSRDCLRELRKDTGIHYENRAKGTLQLFRKEAQMEAVQRDISVLEECGVSYELLNANELGRVEPALANAQDKLVGGLHLPNDETGDCYLFTNALAQIAKELGVNFQFNQNVEKLIVEGDQIKGVQVNGKILTADRYVLAFGSYSRDFLKPLDLQLPVYPVKGYSLTIPIVDPAFAPQSTVLDETYKIAITRFDQRIRVGGMAELSGFNLGLNEDRRATLQMVTQDLFPGGDMEQASFWTGLRPMTPDSTPIIGATRFKNLFLNTGHGTLGWTMACGSGKLISDIVLNHKTDISTDGLSIQRYSHAHAA</sequence>
<accession>A3M0Z0</accession>
<reference key="1">
    <citation type="journal article" date="2007" name="Genes Dev.">
        <title>New insights into Acinetobacter baumannii pathogenesis revealed by high-density pyrosequencing and transposon mutagenesis.</title>
        <authorList>
            <person name="Smith M.G."/>
            <person name="Gianoulis T.A."/>
            <person name="Pukatzki S."/>
            <person name="Mekalanos J.J."/>
            <person name="Ornston L.N."/>
            <person name="Gerstein M."/>
            <person name="Snyder M."/>
        </authorList>
    </citation>
    <scope>NUCLEOTIDE SEQUENCE [LARGE SCALE GENOMIC DNA]</scope>
    <source>
        <strain>ATCC 17978 / DSM 105126 / CIP 53.77 / LMG 1025 / NCDC KC755 / 5377</strain>
    </source>
</reference>